<dbReference type="EMBL" id="AL646052">
    <property type="protein sequence ID" value="CAD16705.1"/>
    <property type="molecule type" value="Genomic_DNA"/>
</dbReference>
<dbReference type="RefSeq" id="WP_011002901.1">
    <property type="nucleotide sequence ID" value="NC_003295.1"/>
</dbReference>
<dbReference type="SMR" id="Q8XV35"/>
<dbReference type="STRING" id="267608.RSc2996"/>
<dbReference type="EnsemblBacteria" id="CAD16705">
    <property type="protein sequence ID" value="CAD16705"/>
    <property type="gene ID" value="RSc2996"/>
</dbReference>
<dbReference type="KEGG" id="rso:RSc2996"/>
<dbReference type="eggNOG" id="COG0099">
    <property type="taxonomic scope" value="Bacteria"/>
</dbReference>
<dbReference type="HOGENOM" id="CLU_103849_1_2_4"/>
<dbReference type="Proteomes" id="UP000001436">
    <property type="component" value="Chromosome"/>
</dbReference>
<dbReference type="GO" id="GO:0005829">
    <property type="term" value="C:cytosol"/>
    <property type="evidence" value="ECO:0007669"/>
    <property type="project" value="TreeGrafter"/>
</dbReference>
<dbReference type="GO" id="GO:0015935">
    <property type="term" value="C:small ribosomal subunit"/>
    <property type="evidence" value="ECO:0007669"/>
    <property type="project" value="TreeGrafter"/>
</dbReference>
<dbReference type="GO" id="GO:0019843">
    <property type="term" value="F:rRNA binding"/>
    <property type="evidence" value="ECO:0007669"/>
    <property type="project" value="UniProtKB-UniRule"/>
</dbReference>
<dbReference type="GO" id="GO:0003735">
    <property type="term" value="F:structural constituent of ribosome"/>
    <property type="evidence" value="ECO:0007669"/>
    <property type="project" value="InterPro"/>
</dbReference>
<dbReference type="GO" id="GO:0000049">
    <property type="term" value="F:tRNA binding"/>
    <property type="evidence" value="ECO:0007669"/>
    <property type="project" value="UniProtKB-UniRule"/>
</dbReference>
<dbReference type="GO" id="GO:0006412">
    <property type="term" value="P:translation"/>
    <property type="evidence" value="ECO:0007669"/>
    <property type="project" value="UniProtKB-UniRule"/>
</dbReference>
<dbReference type="FunFam" id="1.10.8.50:FF:000001">
    <property type="entry name" value="30S ribosomal protein S13"/>
    <property type="match status" value="1"/>
</dbReference>
<dbReference type="FunFam" id="4.10.910.10:FF:000001">
    <property type="entry name" value="30S ribosomal protein S13"/>
    <property type="match status" value="1"/>
</dbReference>
<dbReference type="Gene3D" id="1.10.8.50">
    <property type="match status" value="1"/>
</dbReference>
<dbReference type="Gene3D" id="4.10.910.10">
    <property type="entry name" value="30s ribosomal protein s13, domain 2"/>
    <property type="match status" value="1"/>
</dbReference>
<dbReference type="HAMAP" id="MF_01315">
    <property type="entry name" value="Ribosomal_uS13"/>
    <property type="match status" value="1"/>
</dbReference>
<dbReference type="InterPro" id="IPR027437">
    <property type="entry name" value="Rbsml_uS13_C"/>
</dbReference>
<dbReference type="InterPro" id="IPR001892">
    <property type="entry name" value="Ribosomal_uS13"/>
</dbReference>
<dbReference type="InterPro" id="IPR010979">
    <property type="entry name" value="Ribosomal_uS13-like_H2TH"/>
</dbReference>
<dbReference type="InterPro" id="IPR019980">
    <property type="entry name" value="Ribosomal_uS13_bac-type"/>
</dbReference>
<dbReference type="InterPro" id="IPR018269">
    <property type="entry name" value="Ribosomal_uS13_CS"/>
</dbReference>
<dbReference type="NCBIfam" id="TIGR03631">
    <property type="entry name" value="uS13_bact"/>
    <property type="match status" value="1"/>
</dbReference>
<dbReference type="PANTHER" id="PTHR10871">
    <property type="entry name" value="30S RIBOSOMAL PROTEIN S13/40S RIBOSOMAL PROTEIN S18"/>
    <property type="match status" value="1"/>
</dbReference>
<dbReference type="PANTHER" id="PTHR10871:SF1">
    <property type="entry name" value="SMALL RIBOSOMAL SUBUNIT PROTEIN US13M"/>
    <property type="match status" value="1"/>
</dbReference>
<dbReference type="Pfam" id="PF00416">
    <property type="entry name" value="Ribosomal_S13"/>
    <property type="match status" value="1"/>
</dbReference>
<dbReference type="PIRSF" id="PIRSF002134">
    <property type="entry name" value="Ribosomal_S13"/>
    <property type="match status" value="1"/>
</dbReference>
<dbReference type="SUPFAM" id="SSF46946">
    <property type="entry name" value="S13-like H2TH domain"/>
    <property type="match status" value="1"/>
</dbReference>
<dbReference type="PROSITE" id="PS00646">
    <property type="entry name" value="RIBOSOMAL_S13_1"/>
    <property type="match status" value="1"/>
</dbReference>
<dbReference type="PROSITE" id="PS50159">
    <property type="entry name" value="RIBOSOMAL_S13_2"/>
    <property type="match status" value="1"/>
</dbReference>
<name>RS13_RALN1</name>
<protein>
    <recommendedName>
        <fullName evidence="1">Small ribosomal subunit protein uS13</fullName>
    </recommendedName>
    <alternativeName>
        <fullName evidence="3">30S ribosomal protein S13</fullName>
    </alternativeName>
</protein>
<sequence length="121" mass="13641">MARIAGVNIPNHKHTVIGLTAIYGIGRSRARKICEATGIPTDKKVKDLTDPDQDALRKEIEKFLVEGDLRRETTMNIKRLMDLGCYRGVRHRKGLPLRGQRTRTNARTRKGPRKAGVALKK</sequence>
<organism>
    <name type="scientific">Ralstonia nicotianae (strain ATCC BAA-1114 / GMI1000)</name>
    <name type="common">Ralstonia solanacearum</name>
    <dbReference type="NCBI Taxonomy" id="267608"/>
    <lineage>
        <taxon>Bacteria</taxon>
        <taxon>Pseudomonadati</taxon>
        <taxon>Pseudomonadota</taxon>
        <taxon>Betaproteobacteria</taxon>
        <taxon>Burkholderiales</taxon>
        <taxon>Burkholderiaceae</taxon>
        <taxon>Ralstonia</taxon>
        <taxon>Ralstonia solanacearum species complex</taxon>
    </lineage>
</organism>
<comment type="function">
    <text evidence="1">Located at the top of the head of the 30S subunit, it contacts several helices of the 16S rRNA. In the 70S ribosome it contacts the 23S rRNA (bridge B1a) and protein L5 of the 50S subunit (bridge B1b), connecting the 2 subunits; these bridges are implicated in subunit movement. Contacts the tRNAs in the A and P-sites.</text>
</comment>
<comment type="subunit">
    <text evidence="1">Part of the 30S ribosomal subunit. Forms a loose heterodimer with protein S19. Forms two bridges to the 50S subunit in the 70S ribosome.</text>
</comment>
<comment type="similarity">
    <text evidence="1">Belongs to the universal ribosomal protein uS13 family.</text>
</comment>
<evidence type="ECO:0000255" key="1">
    <source>
        <dbReference type="HAMAP-Rule" id="MF_01315"/>
    </source>
</evidence>
<evidence type="ECO:0000256" key="2">
    <source>
        <dbReference type="SAM" id="MobiDB-lite"/>
    </source>
</evidence>
<evidence type="ECO:0000305" key="3"/>
<reference key="1">
    <citation type="journal article" date="2002" name="Nature">
        <title>Genome sequence of the plant pathogen Ralstonia solanacearum.</title>
        <authorList>
            <person name="Salanoubat M."/>
            <person name="Genin S."/>
            <person name="Artiguenave F."/>
            <person name="Gouzy J."/>
            <person name="Mangenot S."/>
            <person name="Arlat M."/>
            <person name="Billault A."/>
            <person name="Brottier P."/>
            <person name="Camus J.-C."/>
            <person name="Cattolico L."/>
            <person name="Chandler M."/>
            <person name="Choisne N."/>
            <person name="Claudel-Renard C."/>
            <person name="Cunnac S."/>
            <person name="Demange N."/>
            <person name="Gaspin C."/>
            <person name="Lavie M."/>
            <person name="Moisan A."/>
            <person name="Robert C."/>
            <person name="Saurin W."/>
            <person name="Schiex T."/>
            <person name="Siguier P."/>
            <person name="Thebault P."/>
            <person name="Whalen M."/>
            <person name="Wincker P."/>
            <person name="Levy M."/>
            <person name="Weissenbach J."/>
            <person name="Boucher C.A."/>
        </authorList>
    </citation>
    <scope>NUCLEOTIDE SEQUENCE [LARGE SCALE GENOMIC DNA]</scope>
    <source>
        <strain>ATCC BAA-1114 / GMI1000</strain>
    </source>
</reference>
<keyword id="KW-1185">Reference proteome</keyword>
<keyword id="KW-0687">Ribonucleoprotein</keyword>
<keyword id="KW-0689">Ribosomal protein</keyword>
<keyword id="KW-0694">RNA-binding</keyword>
<keyword id="KW-0699">rRNA-binding</keyword>
<keyword id="KW-0820">tRNA-binding</keyword>
<gene>
    <name evidence="1" type="primary">rpsM</name>
    <name type="ordered locus">RSc2996</name>
    <name type="ORF">RS01356</name>
</gene>
<feature type="chain" id="PRO_0000132124" description="Small ribosomal subunit protein uS13">
    <location>
        <begin position="1"/>
        <end position="121"/>
    </location>
</feature>
<feature type="region of interest" description="Disordered" evidence="2">
    <location>
        <begin position="94"/>
        <end position="121"/>
    </location>
</feature>
<accession>Q8XV35</accession>
<proteinExistence type="inferred from homology"/>